<comment type="function">
    <text evidence="1">Catalyzes the attachment of threonine to tRNA(Thr) in a two-step reaction: L-threonine is first activated by ATP to form Thr-AMP and then transferred to the acceptor end of tRNA(Thr). Also edits incorrectly charged L-seryl-tRNA(Thr).</text>
</comment>
<comment type="catalytic activity">
    <reaction evidence="1">
        <text>tRNA(Thr) + L-threonine + ATP = L-threonyl-tRNA(Thr) + AMP + diphosphate + H(+)</text>
        <dbReference type="Rhea" id="RHEA:24624"/>
        <dbReference type="Rhea" id="RHEA-COMP:9670"/>
        <dbReference type="Rhea" id="RHEA-COMP:9704"/>
        <dbReference type="ChEBI" id="CHEBI:15378"/>
        <dbReference type="ChEBI" id="CHEBI:30616"/>
        <dbReference type="ChEBI" id="CHEBI:33019"/>
        <dbReference type="ChEBI" id="CHEBI:57926"/>
        <dbReference type="ChEBI" id="CHEBI:78442"/>
        <dbReference type="ChEBI" id="CHEBI:78534"/>
        <dbReference type="ChEBI" id="CHEBI:456215"/>
        <dbReference type="EC" id="6.1.1.3"/>
    </reaction>
</comment>
<comment type="cofactor">
    <cofactor evidence="1">
        <name>Zn(2+)</name>
        <dbReference type="ChEBI" id="CHEBI:29105"/>
    </cofactor>
    <text evidence="1">Binds 1 zinc ion per subunit.</text>
</comment>
<comment type="subunit">
    <text evidence="1">Homodimer.</text>
</comment>
<comment type="subcellular location">
    <subcellularLocation>
        <location evidence="1">Cytoplasm</location>
    </subcellularLocation>
</comment>
<comment type="similarity">
    <text evidence="1">Belongs to the class-II aminoacyl-tRNA synthetase family.</text>
</comment>
<evidence type="ECO:0000255" key="1">
    <source>
        <dbReference type="HAMAP-Rule" id="MF_00184"/>
    </source>
</evidence>
<evidence type="ECO:0000255" key="2">
    <source>
        <dbReference type="PROSITE-ProRule" id="PRU01228"/>
    </source>
</evidence>
<dbReference type="EC" id="6.1.1.3" evidence="1"/>
<dbReference type="EMBL" id="CP000826">
    <property type="protein sequence ID" value="ABV41245.1"/>
    <property type="molecule type" value="Genomic_DNA"/>
</dbReference>
<dbReference type="SMR" id="A8GDQ5"/>
<dbReference type="STRING" id="399741.Spro_2144"/>
<dbReference type="KEGG" id="spe:Spro_2144"/>
<dbReference type="eggNOG" id="COG0441">
    <property type="taxonomic scope" value="Bacteria"/>
</dbReference>
<dbReference type="HOGENOM" id="CLU_008554_0_1_6"/>
<dbReference type="OrthoDB" id="9802304at2"/>
<dbReference type="GO" id="GO:0005829">
    <property type="term" value="C:cytosol"/>
    <property type="evidence" value="ECO:0007669"/>
    <property type="project" value="TreeGrafter"/>
</dbReference>
<dbReference type="GO" id="GO:0005524">
    <property type="term" value="F:ATP binding"/>
    <property type="evidence" value="ECO:0007669"/>
    <property type="project" value="UniProtKB-UniRule"/>
</dbReference>
<dbReference type="GO" id="GO:0046872">
    <property type="term" value="F:metal ion binding"/>
    <property type="evidence" value="ECO:0007669"/>
    <property type="project" value="UniProtKB-KW"/>
</dbReference>
<dbReference type="GO" id="GO:0004829">
    <property type="term" value="F:threonine-tRNA ligase activity"/>
    <property type="evidence" value="ECO:0007669"/>
    <property type="project" value="UniProtKB-UniRule"/>
</dbReference>
<dbReference type="GO" id="GO:0000049">
    <property type="term" value="F:tRNA binding"/>
    <property type="evidence" value="ECO:0007669"/>
    <property type="project" value="UniProtKB-KW"/>
</dbReference>
<dbReference type="GO" id="GO:0006435">
    <property type="term" value="P:threonyl-tRNA aminoacylation"/>
    <property type="evidence" value="ECO:0007669"/>
    <property type="project" value="UniProtKB-UniRule"/>
</dbReference>
<dbReference type="CDD" id="cd01667">
    <property type="entry name" value="TGS_ThrRS"/>
    <property type="match status" value="1"/>
</dbReference>
<dbReference type="CDD" id="cd00860">
    <property type="entry name" value="ThrRS_anticodon"/>
    <property type="match status" value="1"/>
</dbReference>
<dbReference type="CDD" id="cd00771">
    <property type="entry name" value="ThrRS_core"/>
    <property type="match status" value="1"/>
</dbReference>
<dbReference type="FunFam" id="3.10.20.30:FF:000005">
    <property type="entry name" value="Threonine--tRNA ligase"/>
    <property type="match status" value="1"/>
</dbReference>
<dbReference type="FunFam" id="3.30.54.20:FF:000002">
    <property type="entry name" value="Threonine--tRNA ligase"/>
    <property type="match status" value="1"/>
</dbReference>
<dbReference type="FunFam" id="3.30.930.10:FF:000002">
    <property type="entry name" value="Threonine--tRNA ligase"/>
    <property type="match status" value="1"/>
</dbReference>
<dbReference type="FunFam" id="3.40.50.800:FF:000001">
    <property type="entry name" value="Threonine--tRNA ligase"/>
    <property type="match status" value="1"/>
</dbReference>
<dbReference type="FunFam" id="3.30.980.10:FF:000005">
    <property type="entry name" value="Threonyl-tRNA synthetase, mitochondrial"/>
    <property type="match status" value="1"/>
</dbReference>
<dbReference type="Gene3D" id="3.10.20.30">
    <property type="match status" value="1"/>
</dbReference>
<dbReference type="Gene3D" id="3.30.54.20">
    <property type="match status" value="1"/>
</dbReference>
<dbReference type="Gene3D" id="3.40.50.800">
    <property type="entry name" value="Anticodon-binding domain"/>
    <property type="match status" value="1"/>
</dbReference>
<dbReference type="Gene3D" id="3.30.930.10">
    <property type="entry name" value="Bira Bifunctional Protein, Domain 2"/>
    <property type="match status" value="1"/>
</dbReference>
<dbReference type="Gene3D" id="3.30.980.10">
    <property type="entry name" value="Threonyl-trna Synthetase, Chain A, domain 2"/>
    <property type="match status" value="1"/>
</dbReference>
<dbReference type="HAMAP" id="MF_00184">
    <property type="entry name" value="Thr_tRNA_synth"/>
    <property type="match status" value="1"/>
</dbReference>
<dbReference type="InterPro" id="IPR002314">
    <property type="entry name" value="aa-tRNA-synt_IIb"/>
</dbReference>
<dbReference type="InterPro" id="IPR006195">
    <property type="entry name" value="aa-tRNA-synth_II"/>
</dbReference>
<dbReference type="InterPro" id="IPR045864">
    <property type="entry name" value="aa-tRNA-synth_II/BPL/LPL"/>
</dbReference>
<dbReference type="InterPro" id="IPR004154">
    <property type="entry name" value="Anticodon-bd"/>
</dbReference>
<dbReference type="InterPro" id="IPR036621">
    <property type="entry name" value="Anticodon-bd_dom_sf"/>
</dbReference>
<dbReference type="InterPro" id="IPR012675">
    <property type="entry name" value="Beta-grasp_dom_sf"/>
</dbReference>
<dbReference type="InterPro" id="IPR004095">
    <property type="entry name" value="TGS"/>
</dbReference>
<dbReference type="InterPro" id="IPR012676">
    <property type="entry name" value="TGS-like"/>
</dbReference>
<dbReference type="InterPro" id="IPR002320">
    <property type="entry name" value="Thr-tRNA-ligase_IIa"/>
</dbReference>
<dbReference type="InterPro" id="IPR018163">
    <property type="entry name" value="Thr/Ala-tRNA-synth_IIc_edit"/>
</dbReference>
<dbReference type="InterPro" id="IPR047246">
    <property type="entry name" value="ThrRS_anticodon"/>
</dbReference>
<dbReference type="InterPro" id="IPR033728">
    <property type="entry name" value="ThrRS_core"/>
</dbReference>
<dbReference type="InterPro" id="IPR012947">
    <property type="entry name" value="tRNA_SAD"/>
</dbReference>
<dbReference type="NCBIfam" id="TIGR00418">
    <property type="entry name" value="thrS"/>
    <property type="match status" value="1"/>
</dbReference>
<dbReference type="PANTHER" id="PTHR11451:SF44">
    <property type="entry name" value="THREONINE--TRNA LIGASE, CHLOROPLASTIC_MITOCHONDRIAL 2"/>
    <property type="match status" value="1"/>
</dbReference>
<dbReference type="PANTHER" id="PTHR11451">
    <property type="entry name" value="THREONINE-TRNA LIGASE"/>
    <property type="match status" value="1"/>
</dbReference>
<dbReference type="Pfam" id="PF03129">
    <property type="entry name" value="HGTP_anticodon"/>
    <property type="match status" value="1"/>
</dbReference>
<dbReference type="Pfam" id="PF02824">
    <property type="entry name" value="TGS"/>
    <property type="match status" value="1"/>
</dbReference>
<dbReference type="Pfam" id="PF00587">
    <property type="entry name" value="tRNA-synt_2b"/>
    <property type="match status" value="1"/>
</dbReference>
<dbReference type="Pfam" id="PF07973">
    <property type="entry name" value="tRNA_SAD"/>
    <property type="match status" value="1"/>
</dbReference>
<dbReference type="PRINTS" id="PR01047">
    <property type="entry name" value="TRNASYNTHTHR"/>
</dbReference>
<dbReference type="SMART" id="SM00863">
    <property type="entry name" value="tRNA_SAD"/>
    <property type="match status" value="1"/>
</dbReference>
<dbReference type="SUPFAM" id="SSF52954">
    <property type="entry name" value="Class II aaRS ABD-related"/>
    <property type="match status" value="1"/>
</dbReference>
<dbReference type="SUPFAM" id="SSF55681">
    <property type="entry name" value="Class II aaRS and biotin synthetases"/>
    <property type="match status" value="1"/>
</dbReference>
<dbReference type="SUPFAM" id="SSF81271">
    <property type="entry name" value="TGS-like"/>
    <property type="match status" value="1"/>
</dbReference>
<dbReference type="SUPFAM" id="SSF55186">
    <property type="entry name" value="ThrRS/AlaRS common domain"/>
    <property type="match status" value="1"/>
</dbReference>
<dbReference type="PROSITE" id="PS50862">
    <property type="entry name" value="AA_TRNA_LIGASE_II"/>
    <property type="match status" value="1"/>
</dbReference>
<dbReference type="PROSITE" id="PS51880">
    <property type="entry name" value="TGS"/>
    <property type="match status" value="1"/>
</dbReference>
<keyword id="KW-0030">Aminoacyl-tRNA synthetase</keyword>
<keyword id="KW-0067">ATP-binding</keyword>
<keyword id="KW-0963">Cytoplasm</keyword>
<keyword id="KW-0436">Ligase</keyword>
<keyword id="KW-0479">Metal-binding</keyword>
<keyword id="KW-0547">Nucleotide-binding</keyword>
<keyword id="KW-0648">Protein biosynthesis</keyword>
<keyword id="KW-0694">RNA-binding</keyword>
<keyword id="KW-0820">tRNA-binding</keyword>
<keyword id="KW-0862">Zinc</keyword>
<proteinExistence type="inferred from homology"/>
<sequence length="642" mass="73829">MPVITLPDGSQRHFDHPVSPLDVARDIGPGLAKACIAGRVNGELVDAGDLIESDAQLAIITIKDAEGLEIMRHSCAHLLGHAIKQLWPDTKMAIGPVIDNGFYYDVDIDRTLTQEDLDLLEKRMHELADKDYDVIKKKVSWQEARDTFAARGEDYKVAILDENISHDDRPGLYHHEEYVDMCRGPHVPNMRFCHHFKLQKTSGAYWRGDSKNKMLQRIYGTAWADKKQLNAYLQRLEEAAKRDHRKIGKQLDLYHMQEEAPGMVFWHNDGWTIFRELEAFVRMKLKEYQYQEVKGPFMMDRVLWEKTGHWENYKDAMFTTSSENREYCIKPMNCPGHVQIFNQGLKSYRDLPLRMGEFGSCHRNEPSGSLHGLMRVRGFTQDDAHIFCTEEQVRAEVNECIRMVYDVYGTFGFDKIAVKLSTRPEKRIGTDDMWTRAEEDLAAALTENGIPFEYQPGEGAFYGPKIEFTLHDCLDRAWQCGTVQLDFFLPGRLGASYVGENNDRVVPVMIHRAILGSMERFIGILTEEYAGFYPTWIAPVQVVVMNITDSQSDYVQQLTKKLQDAGIRVKADLRNEKIGFKIREHTLRRVPYMLVCGDKEVESGKVAVRTRRGKDLGSLDVNEVVDKLLKEIRSRSLHQLEE</sequence>
<name>SYT_SERP5</name>
<gene>
    <name evidence="1" type="primary">thrS</name>
    <name type="ordered locus">Spro_2144</name>
</gene>
<protein>
    <recommendedName>
        <fullName evidence="1">Threonine--tRNA ligase</fullName>
        <ecNumber evidence="1">6.1.1.3</ecNumber>
    </recommendedName>
    <alternativeName>
        <fullName evidence="1">Threonyl-tRNA synthetase</fullName>
        <shortName evidence="1">ThrRS</shortName>
    </alternativeName>
</protein>
<reference key="1">
    <citation type="submission" date="2007-09" db="EMBL/GenBank/DDBJ databases">
        <title>Complete sequence of chromosome of Serratia proteamaculans 568.</title>
        <authorList>
            <consortium name="US DOE Joint Genome Institute"/>
            <person name="Copeland A."/>
            <person name="Lucas S."/>
            <person name="Lapidus A."/>
            <person name="Barry K."/>
            <person name="Glavina del Rio T."/>
            <person name="Dalin E."/>
            <person name="Tice H."/>
            <person name="Pitluck S."/>
            <person name="Chain P."/>
            <person name="Malfatti S."/>
            <person name="Shin M."/>
            <person name="Vergez L."/>
            <person name="Schmutz J."/>
            <person name="Larimer F."/>
            <person name="Land M."/>
            <person name="Hauser L."/>
            <person name="Kyrpides N."/>
            <person name="Kim E."/>
            <person name="Taghavi S."/>
            <person name="Newman L."/>
            <person name="Vangronsveld J."/>
            <person name="van der Lelie D."/>
            <person name="Richardson P."/>
        </authorList>
    </citation>
    <scope>NUCLEOTIDE SEQUENCE [LARGE SCALE GENOMIC DNA]</scope>
    <source>
        <strain>568</strain>
    </source>
</reference>
<accession>A8GDQ5</accession>
<organism>
    <name type="scientific">Serratia proteamaculans (strain 568)</name>
    <dbReference type="NCBI Taxonomy" id="399741"/>
    <lineage>
        <taxon>Bacteria</taxon>
        <taxon>Pseudomonadati</taxon>
        <taxon>Pseudomonadota</taxon>
        <taxon>Gammaproteobacteria</taxon>
        <taxon>Enterobacterales</taxon>
        <taxon>Yersiniaceae</taxon>
        <taxon>Serratia</taxon>
    </lineage>
</organism>
<feature type="chain" id="PRO_1000058429" description="Threonine--tRNA ligase">
    <location>
        <begin position="1"/>
        <end position="642"/>
    </location>
</feature>
<feature type="domain" description="TGS" evidence="2">
    <location>
        <begin position="1"/>
        <end position="61"/>
    </location>
</feature>
<feature type="region of interest" description="Catalytic" evidence="1">
    <location>
        <begin position="243"/>
        <end position="534"/>
    </location>
</feature>
<feature type="binding site" evidence="1">
    <location>
        <position position="334"/>
    </location>
    <ligand>
        <name>Zn(2+)</name>
        <dbReference type="ChEBI" id="CHEBI:29105"/>
    </ligand>
</feature>
<feature type="binding site" evidence="1">
    <location>
        <position position="385"/>
    </location>
    <ligand>
        <name>Zn(2+)</name>
        <dbReference type="ChEBI" id="CHEBI:29105"/>
    </ligand>
</feature>
<feature type="binding site" evidence="1">
    <location>
        <position position="511"/>
    </location>
    <ligand>
        <name>Zn(2+)</name>
        <dbReference type="ChEBI" id="CHEBI:29105"/>
    </ligand>
</feature>